<gene>
    <name type="ordered locus">Ajs_1507</name>
</gene>
<dbReference type="EC" id="2.4.2.4" evidence="1"/>
<dbReference type="EMBL" id="CP000539">
    <property type="protein sequence ID" value="ABM41706.1"/>
    <property type="molecule type" value="Genomic_DNA"/>
</dbReference>
<dbReference type="SMR" id="A1W631"/>
<dbReference type="STRING" id="232721.Ajs_1507"/>
<dbReference type="KEGG" id="ajs:Ajs_1507"/>
<dbReference type="eggNOG" id="COG0213">
    <property type="taxonomic scope" value="Bacteria"/>
</dbReference>
<dbReference type="HOGENOM" id="CLU_025040_6_0_4"/>
<dbReference type="Proteomes" id="UP000000645">
    <property type="component" value="Chromosome"/>
</dbReference>
<dbReference type="GO" id="GO:0005829">
    <property type="term" value="C:cytosol"/>
    <property type="evidence" value="ECO:0007669"/>
    <property type="project" value="TreeGrafter"/>
</dbReference>
<dbReference type="GO" id="GO:0004645">
    <property type="term" value="F:1,4-alpha-oligoglucan phosphorylase activity"/>
    <property type="evidence" value="ECO:0007669"/>
    <property type="project" value="InterPro"/>
</dbReference>
<dbReference type="GO" id="GO:0009032">
    <property type="term" value="F:thymidine phosphorylase activity"/>
    <property type="evidence" value="ECO:0007669"/>
    <property type="project" value="UniProtKB-UniRule"/>
</dbReference>
<dbReference type="GO" id="GO:0006206">
    <property type="term" value="P:pyrimidine nucleobase metabolic process"/>
    <property type="evidence" value="ECO:0007669"/>
    <property type="project" value="InterPro"/>
</dbReference>
<dbReference type="GO" id="GO:0006213">
    <property type="term" value="P:pyrimidine nucleoside metabolic process"/>
    <property type="evidence" value="ECO:0007669"/>
    <property type="project" value="InterPro"/>
</dbReference>
<dbReference type="Gene3D" id="1.20.970.50">
    <property type="match status" value="1"/>
</dbReference>
<dbReference type="Gene3D" id="3.40.1030.10">
    <property type="entry name" value="Nucleoside phosphorylase/phosphoribosyltransferase catalytic domain"/>
    <property type="match status" value="1"/>
</dbReference>
<dbReference type="Gene3D" id="3.90.1170.30">
    <property type="entry name" value="Pyrimidine nucleoside phosphorylase-like, C-terminal domain"/>
    <property type="match status" value="1"/>
</dbReference>
<dbReference type="HAMAP" id="MF_00703">
    <property type="entry name" value="Thymid_phosp_2"/>
    <property type="match status" value="1"/>
</dbReference>
<dbReference type="InterPro" id="IPR000312">
    <property type="entry name" value="Glycosyl_Trfase_fam3"/>
</dbReference>
<dbReference type="InterPro" id="IPR017459">
    <property type="entry name" value="Glycosyl_Trfase_fam3_N_dom"/>
</dbReference>
<dbReference type="InterPro" id="IPR036320">
    <property type="entry name" value="Glycosyl_Trfase_fam3_N_dom_sf"/>
</dbReference>
<dbReference type="InterPro" id="IPR035902">
    <property type="entry name" value="Nuc_phospho_transferase"/>
</dbReference>
<dbReference type="InterPro" id="IPR036566">
    <property type="entry name" value="PYNP-like_C_sf"/>
</dbReference>
<dbReference type="InterPro" id="IPR013102">
    <property type="entry name" value="PYNP_C"/>
</dbReference>
<dbReference type="InterPro" id="IPR017872">
    <property type="entry name" value="Pyrmidine_PPase_CS"/>
</dbReference>
<dbReference type="InterPro" id="IPR028579">
    <property type="entry name" value="Thym_Pase_Put"/>
</dbReference>
<dbReference type="InterPro" id="IPR013466">
    <property type="entry name" value="Thymidine/AMP_Pase"/>
</dbReference>
<dbReference type="InterPro" id="IPR000053">
    <property type="entry name" value="Thymidine/pyrmidine_PPase"/>
</dbReference>
<dbReference type="NCBIfam" id="TIGR02645">
    <property type="entry name" value="ARCH_P_rylase"/>
    <property type="match status" value="1"/>
</dbReference>
<dbReference type="NCBIfam" id="NF003338">
    <property type="entry name" value="PRK04350.1"/>
    <property type="match status" value="1"/>
</dbReference>
<dbReference type="PANTHER" id="PTHR10515">
    <property type="entry name" value="THYMIDINE PHOSPHORYLASE"/>
    <property type="match status" value="1"/>
</dbReference>
<dbReference type="PANTHER" id="PTHR10515:SF0">
    <property type="entry name" value="THYMIDINE PHOSPHORYLASE"/>
    <property type="match status" value="1"/>
</dbReference>
<dbReference type="Pfam" id="PF02885">
    <property type="entry name" value="Glycos_trans_3N"/>
    <property type="match status" value="1"/>
</dbReference>
<dbReference type="Pfam" id="PF00591">
    <property type="entry name" value="Glycos_transf_3"/>
    <property type="match status" value="1"/>
</dbReference>
<dbReference type="Pfam" id="PF07831">
    <property type="entry name" value="PYNP_C"/>
    <property type="match status" value="1"/>
</dbReference>
<dbReference type="SMART" id="SM00941">
    <property type="entry name" value="PYNP_C"/>
    <property type="match status" value="1"/>
</dbReference>
<dbReference type="SUPFAM" id="SSF52418">
    <property type="entry name" value="Nucleoside phosphorylase/phosphoribosyltransferase catalytic domain"/>
    <property type="match status" value="1"/>
</dbReference>
<dbReference type="SUPFAM" id="SSF47648">
    <property type="entry name" value="Nucleoside phosphorylase/phosphoribosyltransferase N-terminal domain"/>
    <property type="match status" value="1"/>
</dbReference>
<dbReference type="SUPFAM" id="SSF54680">
    <property type="entry name" value="Pyrimidine nucleoside phosphorylase C-terminal domain"/>
    <property type="match status" value="1"/>
</dbReference>
<dbReference type="PROSITE" id="PS00647">
    <property type="entry name" value="THYMID_PHOSPHORYLASE"/>
    <property type="match status" value="1"/>
</dbReference>
<proteinExistence type="inferred from homology"/>
<accession>A1W631</accession>
<evidence type="ECO:0000255" key="1">
    <source>
        <dbReference type="HAMAP-Rule" id="MF_00703"/>
    </source>
</evidence>
<comment type="catalytic activity">
    <reaction evidence="1">
        <text>thymidine + phosphate = 2-deoxy-alpha-D-ribose 1-phosphate + thymine</text>
        <dbReference type="Rhea" id="RHEA:16037"/>
        <dbReference type="ChEBI" id="CHEBI:17748"/>
        <dbReference type="ChEBI" id="CHEBI:17821"/>
        <dbReference type="ChEBI" id="CHEBI:43474"/>
        <dbReference type="ChEBI" id="CHEBI:57259"/>
        <dbReference type="EC" id="2.4.2.4"/>
    </reaction>
</comment>
<comment type="similarity">
    <text evidence="1">Belongs to the thymidine/pyrimidine-nucleoside phosphorylase family. Type 2 subfamily.</text>
</comment>
<organism>
    <name type="scientific">Acidovorax sp. (strain JS42)</name>
    <dbReference type="NCBI Taxonomy" id="232721"/>
    <lineage>
        <taxon>Bacteria</taxon>
        <taxon>Pseudomonadati</taxon>
        <taxon>Pseudomonadota</taxon>
        <taxon>Betaproteobacteria</taxon>
        <taxon>Burkholderiales</taxon>
        <taxon>Comamonadaceae</taxon>
        <taxon>Acidovorax</taxon>
    </lineage>
</organism>
<feature type="chain" id="PRO_0000314694" description="Putative thymidine phosphorylase 1">
    <location>
        <begin position="1"/>
        <end position="511"/>
    </location>
</feature>
<reference key="1">
    <citation type="submission" date="2006-12" db="EMBL/GenBank/DDBJ databases">
        <title>Complete sequence of chromosome 1 of Acidovorax sp. JS42.</title>
        <authorList>
            <person name="Copeland A."/>
            <person name="Lucas S."/>
            <person name="Lapidus A."/>
            <person name="Barry K."/>
            <person name="Detter J.C."/>
            <person name="Glavina del Rio T."/>
            <person name="Dalin E."/>
            <person name="Tice H."/>
            <person name="Pitluck S."/>
            <person name="Chertkov O."/>
            <person name="Brettin T."/>
            <person name="Bruce D."/>
            <person name="Han C."/>
            <person name="Tapia R."/>
            <person name="Gilna P."/>
            <person name="Schmutz J."/>
            <person name="Larimer F."/>
            <person name="Land M."/>
            <person name="Hauser L."/>
            <person name="Kyrpides N."/>
            <person name="Kim E."/>
            <person name="Stahl D."/>
            <person name="Richardson P."/>
        </authorList>
    </citation>
    <scope>NUCLEOTIDE SEQUENCE [LARGE SCALE GENOMIC DNA]</scope>
    <source>
        <strain>JS42</strain>
    </source>
</reference>
<name>TYPH1_ACISJ</name>
<protein>
    <recommendedName>
        <fullName evidence="1">Putative thymidine phosphorylase 1</fullName>
        <ecNumber evidence="1">2.4.2.4</ecNumber>
    </recommendedName>
    <alternativeName>
        <fullName evidence="1">TdRPase 1</fullName>
    </alternativeName>
</protein>
<keyword id="KW-0328">Glycosyltransferase</keyword>
<keyword id="KW-0808">Transferase</keyword>
<sequence>MSDHAMNEQRDHDTRLRAWRTGIDTYQEPIVYMRSDCVVCRSEGFTTQTRVLLTAGTRSAVATLNVVEGNWLAPGVAGLSEAAWHALDPAADAWINVSYAPTLDSLSHVRAKVYGHRLDAGAFNAVIGDVAAGRYSDLYLAAFVTACAGDRLDLSETVALTRAMVAVGHRLDWGRETVVDKHCVGGLPGNRTTLLVVPIVAACGLTMPKTSSRAITSPAGTADTMEVLAPVNLDIAAMRRTVERTGGCIVWGGSVRLSPADDVLIRVERPLDLDSEGQLVASVLSKKAAAGSTHVLIDLPVGPTAKVRSTEAAQSLGRRLVEVGRAIGLQVTLRITDGLQPVGRGVGPALEARDVLAVLRGQADAPDDLRQRALRLAGDILELGGAAPNGSGLQLAAEVLADGRAWAKFQAICEAQGGLREVPVTPYRQVITAAVAGRVAAIDNRVLARAAKLAGAPKAPAAGVDVHARIGDPVQAGQPLFTLHAQTAGELDYAGHFVDTRPPIFQISEEA</sequence>